<accession>Q7V1B5</accession>
<dbReference type="EC" id="3.5.1.5" evidence="1"/>
<dbReference type="EMBL" id="BX548174">
    <property type="protein sequence ID" value="CAE19423.1"/>
    <property type="molecule type" value="Genomic_DNA"/>
</dbReference>
<dbReference type="RefSeq" id="WP_011132597.1">
    <property type="nucleotide sequence ID" value="NC_005072.1"/>
</dbReference>
<dbReference type="SMR" id="Q7V1B5"/>
<dbReference type="STRING" id="59919.PMM0964"/>
<dbReference type="KEGG" id="pmm:PMM0964"/>
<dbReference type="eggNOG" id="COG0832">
    <property type="taxonomic scope" value="Bacteria"/>
</dbReference>
<dbReference type="HOGENOM" id="CLU_129707_1_1_3"/>
<dbReference type="OrthoDB" id="9797217at2"/>
<dbReference type="UniPathway" id="UPA00258">
    <property type="reaction ID" value="UER00370"/>
</dbReference>
<dbReference type="Proteomes" id="UP000001026">
    <property type="component" value="Chromosome"/>
</dbReference>
<dbReference type="GO" id="GO:0035550">
    <property type="term" value="C:urease complex"/>
    <property type="evidence" value="ECO:0007669"/>
    <property type="project" value="InterPro"/>
</dbReference>
<dbReference type="GO" id="GO:0009039">
    <property type="term" value="F:urease activity"/>
    <property type="evidence" value="ECO:0007669"/>
    <property type="project" value="UniProtKB-UniRule"/>
</dbReference>
<dbReference type="GO" id="GO:0043419">
    <property type="term" value="P:urea catabolic process"/>
    <property type="evidence" value="ECO:0007669"/>
    <property type="project" value="UniProtKB-UniRule"/>
</dbReference>
<dbReference type="CDD" id="cd00407">
    <property type="entry name" value="Urease_beta"/>
    <property type="match status" value="1"/>
</dbReference>
<dbReference type="FunFam" id="2.10.150.10:FF:000001">
    <property type="entry name" value="Urease subunit beta"/>
    <property type="match status" value="1"/>
</dbReference>
<dbReference type="Gene3D" id="2.10.150.10">
    <property type="entry name" value="Urease, beta subunit"/>
    <property type="match status" value="1"/>
</dbReference>
<dbReference type="HAMAP" id="MF_01954">
    <property type="entry name" value="Urease_beta"/>
    <property type="match status" value="1"/>
</dbReference>
<dbReference type="InterPro" id="IPR002019">
    <property type="entry name" value="Urease_beta-like"/>
</dbReference>
<dbReference type="InterPro" id="IPR036461">
    <property type="entry name" value="Urease_betasu_sf"/>
</dbReference>
<dbReference type="InterPro" id="IPR050069">
    <property type="entry name" value="Urease_subunit"/>
</dbReference>
<dbReference type="NCBIfam" id="NF009682">
    <property type="entry name" value="PRK13203.1"/>
    <property type="match status" value="1"/>
</dbReference>
<dbReference type="NCBIfam" id="TIGR00192">
    <property type="entry name" value="urease_beta"/>
    <property type="match status" value="1"/>
</dbReference>
<dbReference type="PANTHER" id="PTHR33569">
    <property type="entry name" value="UREASE"/>
    <property type="match status" value="1"/>
</dbReference>
<dbReference type="PANTHER" id="PTHR33569:SF1">
    <property type="entry name" value="UREASE"/>
    <property type="match status" value="1"/>
</dbReference>
<dbReference type="Pfam" id="PF00699">
    <property type="entry name" value="Urease_beta"/>
    <property type="match status" value="1"/>
</dbReference>
<dbReference type="SUPFAM" id="SSF51278">
    <property type="entry name" value="Urease, beta-subunit"/>
    <property type="match status" value="1"/>
</dbReference>
<reference key="1">
    <citation type="journal article" date="2003" name="Nature">
        <title>Genome divergence in two Prochlorococcus ecotypes reflects oceanic niche differentiation.</title>
        <authorList>
            <person name="Rocap G."/>
            <person name="Larimer F.W."/>
            <person name="Lamerdin J.E."/>
            <person name="Malfatti S."/>
            <person name="Chain P."/>
            <person name="Ahlgren N.A."/>
            <person name="Arellano A."/>
            <person name="Coleman M."/>
            <person name="Hauser L."/>
            <person name="Hess W.R."/>
            <person name="Johnson Z.I."/>
            <person name="Land M.L."/>
            <person name="Lindell D."/>
            <person name="Post A.F."/>
            <person name="Regala W."/>
            <person name="Shah M."/>
            <person name="Shaw S.L."/>
            <person name="Steglich C."/>
            <person name="Sullivan M.B."/>
            <person name="Ting C.S."/>
            <person name="Tolonen A."/>
            <person name="Webb E.A."/>
            <person name="Zinser E.R."/>
            <person name="Chisholm S.W."/>
        </authorList>
    </citation>
    <scope>NUCLEOTIDE SEQUENCE [LARGE SCALE GENOMIC DNA]</scope>
    <source>
        <strain>CCMP1986 / NIES-2087 / MED4</strain>
    </source>
</reference>
<sequence length="106" mass="11678">MEYLIPGEIITEDGDIELNSGKNAKTLTVSNTGDRPIQVGSHYHFFETNKALIFTREITLGMRLDIPAGTAIRFEPGDTTEVKLIPYSGYRNAFGFNALINGPLDS</sequence>
<organism>
    <name type="scientific">Prochlorococcus marinus subsp. pastoris (strain CCMP1986 / NIES-2087 / MED4)</name>
    <dbReference type="NCBI Taxonomy" id="59919"/>
    <lineage>
        <taxon>Bacteria</taxon>
        <taxon>Bacillati</taxon>
        <taxon>Cyanobacteriota</taxon>
        <taxon>Cyanophyceae</taxon>
        <taxon>Synechococcales</taxon>
        <taxon>Prochlorococcaceae</taxon>
        <taxon>Prochlorococcus</taxon>
    </lineage>
</organism>
<keyword id="KW-0963">Cytoplasm</keyword>
<keyword id="KW-0378">Hydrolase</keyword>
<evidence type="ECO:0000255" key="1">
    <source>
        <dbReference type="HAMAP-Rule" id="MF_01954"/>
    </source>
</evidence>
<name>URE2_PROMP</name>
<gene>
    <name evidence="1" type="primary">ureB</name>
    <name type="ordered locus">PMM0964</name>
</gene>
<proteinExistence type="inferred from homology"/>
<comment type="catalytic activity">
    <reaction evidence="1">
        <text>urea + 2 H2O + H(+) = hydrogencarbonate + 2 NH4(+)</text>
        <dbReference type="Rhea" id="RHEA:20557"/>
        <dbReference type="ChEBI" id="CHEBI:15377"/>
        <dbReference type="ChEBI" id="CHEBI:15378"/>
        <dbReference type="ChEBI" id="CHEBI:16199"/>
        <dbReference type="ChEBI" id="CHEBI:17544"/>
        <dbReference type="ChEBI" id="CHEBI:28938"/>
        <dbReference type="EC" id="3.5.1.5"/>
    </reaction>
</comment>
<comment type="pathway">
    <text evidence="1">Nitrogen metabolism; urea degradation; CO(2) and NH(3) from urea (urease route): step 1/1.</text>
</comment>
<comment type="subunit">
    <text evidence="1">Heterotrimer of UreA (gamma), UreB (beta) and UreC (alpha) subunits. Three heterotrimers associate to form the active enzyme.</text>
</comment>
<comment type="subcellular location">
    <subcellularLocation>
        <location evidence="1">Cytoplasm</location>
    </subcellularLocation>
</comment>
<comment type="similarity">
    <text evidence="1">Belongs to the urease beta subunit family.</text>
</comment>
<feature type="chain" id="PRO_0000234258" description="Urease subunit beta">
    <location>
        <begin position="1"/>
        <end position="106"/>
    </location>
</feature>
<protein>
    <recommendedName>
        <fullName evidence="1">Urease subunit beta</fullName>
        <ecNumber evidence="1">3.5.1.5</ecNumber>
    </recommendedName>
    <alternativeName>
        <fullName evidence="1">Urea amidohydrolase subunit beta</fullName>
    </alternativeName>
</protein>